<feature type="chain" id="PRO_0000414031" description="Multidrug resistance protein MdtB">
    <location>
        <begin position="1"/>
        <end position="1056"/>
    </location>
</feature>
<feature type="transmembrane region" description="Helical" evidence="1">
    <location>
        <begin position="16"/>
        <end position="36"/>
    </location>
</feature>
<feature type="transmembrane region" description="Helical" evidence="1">
    <location>
        <begin position="342"/>
        <end position="362"/>
    </location>
</feature>
<feature type="transmembrane region" description="Helical" evidence="1">
    <location>
        <begin position="373"/>
        <end position="393"/>
    </location>
</feature>
<feature type="transmembrane region" description="Helical" evidence="1">
    <location>
        <begin position="396"/>
        <end position="416"/>
    </location>
</feature>
<feature type="transmembrane region" description="Helical" evidence="1">
    <location>
        <begin position="440"/>
        <end position="460"/>
    </location>
</feature>
<feature type="transmembrane region" description="Helical" evidence="1">
    <location>
        <begin position="472"/>
        <end position="492"/>
    </location>
</feature>
<feature type="transmembrane region" description="Helical" evidence="1">
    <location>
        <begin position="537"/>
        <end position="557"/>
    </location>
</feature>
<feature type="transmembrane region" description="Helical" evidence="1">
    <location>
        <begin position="869"/>
        <end position="889"/>
    </location>
</feature>
<feature type="transmembrane region" description="Helical" evidence="1">
    <location>
        <begin position="890"/>
        <end position="910"/>
    </location>
</feature>
<feature type="transmembrane region" description="Helical" evidence="1">
    <location>
        <begin position="911"/>
        <end position="931"/>
    </location>
</feature>
<feature type="transmembrane region" description="Helical" evidence="1">
    <location>
        <begin position="968"/>
        <end position="988"/>
    </location>
</feature>
<feature type="transmembrane region" description="Helical" evidence="1">
    <location>
        <begin position="1002"/>
        <end position="1022"/>
    </location>
</feature>
<feature type="region of interest" description="Disordered" evidence="2">
    <location>
        <begin position="1037"/>
        <end position="1056"/>
    </location>
</feature>
<feature type="compositionally biased region" description="Basic and acidic residues" evidence="2">
    <location>
        <begin position="1043"/>
        <end position="1056"/>
    </location>
</feature>
<organism>
    <name type="scientific">Xenorhabdus bovienii (strain SS-2004)</name>
    <name type="common">Xenorhabdus nematophila subsp. bovienii</name>
    <dbReference type="NCBI Taxonomy" id="406818"/>
    <lineage>
        <taxon>Bacteria</taxon>
        <taxon>Pseudomonadati</taxon>
        <taxon>Pseudomonadota</taxon>
        <taxon>Gammaproteobacteria</taxon>
        <taxon>Enterobacterales</taxon>
        <taxon>Morganellaceae</taxon>
        <taxon>Xenorhabdus</taxon>
    </lineage>
</organism>
<name>MDTB_XENBS</name>
<evidence type="ECO:0000255" key="1">
    <source>
        <dbReference type="HAMAP-Rule" id="MF_01423"/>
    </source>
</evidence>
<evidence type="ECO:0000256" key="2">
    <source>
        <dbReference type="SAM" id="MobiDB-lite"/>
    </source>
</evidence>
<sequence>MHSDSPMTGGGPSRLFILRPVATTLFMIAILLAGIIGYRMLPVSALPQVDYPTIQVVTLYPGASPDIMTSVVTAPLERQFGKISGLKQMTSQSSGGASVITLVFQLSLPLDVAEQDVQAAINAATNLLPNDLPYPPIYSKVNPADPPILTLAVTSDALPMIQVQDMVETRIAQRISQVGGVGLVTLAGGQRPAVRVKFNAQAIAAHGLNSETIRTTIMNANVSSAKGSFDGPTRSVTLTTNDQMKSIDEYRNLIVAYKNGAPIRLRDVATIERGAENTKLGAWANEKPAIVINVQRQPGANVIDTTDNIRAMLPELINSLPKSVNMDILTDRTVTIRASVQDVQFELLLAIALVVMVIYVFLRNATATLIPSIAVPLSLVGTFAVMYFCGFSVNNLTLMALTIAAGFVVDDAIVVIENISRYIERGEKPMAAALKGAGEIGFTIISLTFSLIAVLIPLLFMGDIVGRLFREFAITLAVAILISAVVSLTLTPMMCARMLKAEAEIKHNRFEQASEHFFERIIAIYGGWLKRVLNHPWITLGVAFSTLAFTALLYLTIPKGFFPLQDNGLIQGTLEAPQSISFNAMSDKQREVTALLLQDPDVENVTTFIGVDGSNSTLNSGRLQITLKPLNQRDIRVDEIIPRLQARVANVPDVKLYLQPTQDLTIDTQVARTQYQFTLQGTVSNDLNIWVPKLQEALKQRPELVDVGTDWQNRGLVAYINVNRDMASRLGISMTAIDNALYNAFGQRLISTIYTQANQYRVILEQDTQNEAGMNAFNNVHLIGTDNKVVPLSTIATVEQQLGYLSINHLQQFPAVTFSFNVAQEASLEAAVNAVKETERSIGMPKNINTQFQGATLAFQDALGNTLWLILAAVISMYIVLGILYESFIHPVTILSTLPTAGVGALLALMVGGYELDIIAIIGIILLIGIVKKNAIMMIDFALAAEREKGMSPYDAIFQACLLRFRPILMTTMAALLGALPLMLSTGIGAELRRPLGICMVGGLIMSQILTLFTTPVIYLLFDRLANYFKNKRQNRLQSQNQRELDHSPVNHQEPL</sequence>
<dbReference type="EMBL" id="FN667741">
    <property type="protein sequence ID" value="CBJ81855.1"/>
    <property type="molecule type" value="Genomic_DNA"/>
</dbReference>
<dbReference type="RefSeq" id="WP_012989141.1">
    <property type="nucleotide sequence ID" value="NC_013892.1"/>
</dbReference>
<dbReference type="SMR" id="D3V7P3"/>
<dbReference type="STRING" id="406818.XBJ1_2731"/>
<dbReference type="KEGG" id="xbo:XBJ1_2731"/>
<dbReference type="PATRIC" id="fig|406818.4.peg.2465"/>
<dbReference type="eggNOG" id="COG0841">
    <property type="taxonomic scope" value="Bacteria"/>
</dbReference>
<dbReference type="HOGENOM" id="CLU_002755_1_2_6"/>
<dbReference type="Proteomes" id="UP000002045">
    <property type="component" value="Chromosome"/>
</dbReference>
<dbReference type="GO" id="GO:0005886">
    <property type="term" value="C:plasma membrane"/>
    <property type="evidence" value="ECO:0007669"/>
    <property type="project" value="UniProtKB-SubCell"/>
</dbReference>
<dbReference type="GO" id="GO:0042910">
    <property type="term" value="F:xenobiotic transmembrane transporter activity"/>
    <property type="evidence" value="ECO:0007669"/>
    <property type="project" value="TreeGrafter"/>
</dbReference>
<dbReference type="FunFam" id="1.20.1640.10:FF:000001">
    <property type="entry name" value="Efflux pump membrane transporter"/>
    <property type="match status" value="1"/>
</dbReference>
<dbReference type="FunFam" id="3.30.70.1430:FF:000001">
    <property type="entry name" value="Efflux pump membrane transporter"/>
    <property type="match status" value="1"/>
</dbReference>
<dbReference type="Gene3D" id="3.30.70.1430">
    <property type="entry name" value="Multidrug efflux transporter AcrB pore domain"/>
    <property type="match status" value="2"/>
</dbReference>
<dbReference type="Gene3D" id="3.30.70.1440">
    <property type="entry name" value="Multidrug efflux transporter AcrB pore domain"/>
    <property type="match status" value="1"/>
</dbReference>
<dbReference type="Gene3D" id="3.30.70.1320">
    <property type="entry name" value="Multidrug efflux transporter AcrB pore domain like"/>
    <property type="match status" value="1"/>
</dbReference>
<dbReference type="Gene3D" id="3.30.2090.10">
    <property type="entry name" value="Multidrug efflux transporter AcrB TolC docking domain, DN and DC subdomains"/>
    <property type="match status" value="2"/>
</dbReference>
<dbReference type="Gene3D" id="1.20.1640.10">
    <property type="entry name" value="Multidrug efflux transporter AcrB transmembrane domain"/>
    <property type="match status" value="2"/>
</dbReference>
<dbReference type="HAMAP" id="MF_01423">
    <property type="entry name" value="MdtB"/>
    <property type="match status" value="1"/>
</dbReference>
<dbReference type="InterPro" id="IPR027463">
    <property type="entry name" value="AcrB_DN_DC_subdom"/>
</dbReference>
<dbReference type="InterPro" id="IPR001036">
    <property type="entry name" value="Acrflvin-R"/>
</dbReference>
<dbReference type="InterPro" id="IPR022831">
    <property type="entry name" value="Multidrug-R_MdtB"/>
</dbReference>
<dbReference type="NCBIfam" id="NF007798">
    <property type="entry name" value="PRK10503.1"/>
    <property type="match status" value="1"/>
</dbReference>
<dbReference type="NCBIfam" id="NF033617">
    <property type="entry name" value="RND_permease_2"/>
    <property type="match status" value="1"/>
</dbReference>
<dbReference type="PANTHER" id="PTHR32063">
    <property type="match status" value="1"/>
</dbReference>
<dbReference type="PANTHER" id="PTHR32063:SF21">
    <property type="entry name" value="MULTIDRUG RESISTANCE PROTEIN MDTB"/>
    <property type="match status" value="1"/>
</dbReference>
<dbReference type="Pfam" id="PF00873">
    <property type="entry name" value="ACR_tran"/>
    <property type="match status" value="1"/>
</dbReference>
<dbReference type="PRINTS" id="PR00702">
    <property type="entry name" value="ACRIFLAVINRP"/>
</dbReference>
<dbReference type="SUPFAM" id="SSF82693">
    <property type="entry name" value="Multidrug efflux transporter AcrB pore domain, PN1, PN2, PC1 and PC2 subdomains"/>
    <property type="match status" value="4"/>
</dbReference>
<dbReference type="SUPFAM" id="SSF82714">
    <property type="entry name" value="Multidrug efflux transporter AcrB TolC docking domain, DN and DC subdomains"/>
    <property type="match status" value="2"/>
</dbReference>
<dbReference type="SUPFAM" id="SSF82866">
    <property type="entry name" value="Multidrug efflux transporter AcrB transmembrane domain"/>
    <property type="match status" value="2"/>
</dbReference>
<keyword id="KW-0997">Cell inner membrane</keyword>
<keyword id="KW-1003">Cell membrane</keyword>
<keyword id="KW-0472">Membrane</keyword>
<keyword id="KW-0812">Transmembrane</keyword>
<keyword id="KW-1133">Transmembrane helix</keyword>
<keyword id="KW-0813">Transport</keyword>
<comment type="subunit">
    <text evidence="1">Part of a tripartite efflux system composed of MdtA, MdtB and MdtC. MdtB forms a heteromultimer with MdtC.</text>
</comment>
<comment type="subcellular location">
    <subcellularLocation>
        <location evidence="1">Cell inner membrane</location>
        <topology evidence="1">Multi-pass membrane protein</topology>
    </subcellularLocation>
</comment>
<comment type="similarity">
    <text evidence="1">Belongs to the resistance-nodulation-cell division (RND) (TC 2.A.6) family. MdtB subfamily.</text>
</comment>
<reference key="1">
    <citation type="journal article" date="2011" name="PLoS ONE">
        <title>The entomopathogenic bacterial endosymbionts xenorhabdus and photorhabdus: convergent lifestyles from divergent genomes.</title>
        <authorList>
            <person name="Chaston J.M."/>
            <person name="Suen G."/>
            <person name="Tucker S.L."/>
            <person name="Andersen A.W."/>
            <person name="Bhasin A."/>
            <person name="Bode E."/>
            <person name="Bode H.B."/>
            <person name="Brachmann A.O."/>
            <person name="Cowles C.E."/>
            <person name="Cowles K.N."/>
            <person name="Darby C."/>
            <person name="de Leon L."/>
            <person name="Drace K."/>
            <person name="Du Z."/>
            <person name="Givaudan A."/>
            <person name="Herbert Tran E.E."/>
            <person name="Jewell K.A."/>
            <person name="Knack J.J."/>
            <person name="Krasomil-Osterfeld K.C."/>
            <person name="Kukor R."/>
            <person name="Lanois A."/>
            <person name="Latreille P."/>
            <person name="Leimgruber N.K."/>
            <person name="Lipke C.M."/>
            <person name="Liu R."/>
            <person name="Lu X."/>
            <person name="Martens E.C."/>
            <person name="Marri P.R."/>
            <person name="Medigue C."/>
            <person name="Menard M.L."/>
            <person name="Miller N.M."/>
            <person name="Morales-Soto N."/>
            <person name="Norton S."/>
            <person name="Ogier J.C."/>
            <person name="Orchard S.S."/>
            <person name="Park D."/>
            <person name="Park Y."/>
            <person name="Qurollo B.A."/>
            <person name="Sugar D.R."/>
            <person name="Richards G.R."/>
            <person name="Rouy Z."/>
            <person name="Slominski B."/>
            <person name="Slominski K."/>
            <person name="Snyder H."/>
            <person name="Tjaden B.C."/>
            <person name="van der Hoeven R."/>
            <person name="Welch R.D."/>
            <person name="Wheeler C."/>
            <person name="Xiang B."/>
            <person name="Barbazuk B."/>
            <person name="Gaudriault S."/>
            <person name="Goodner B."/>
            <person name="Slater S.C."/>
            <person name="Forst S."/>
            <person name="Goldman B.S."/>
            <person name="Goodrich-Blair H."/>
        </authorList>
    </citation>
    <scope>NUCLEOTIDE SEQUENCE [LARGE SCALE GENOMIC DNA]</scope>
    <source>
        <strain>SS-2004</strain>
    </source>
</reference>
<proteinExistence type="inferred from homology"/>
<gene>
    <name evidence="1" type="primary">mdtB</name>
    <name type="ordered locus">XBJ1_2731</name>
</gene>
<accession>D3V7P3</accession>
<protein>
    <recommendedName>
        <fullName evidence="1">Multidrug resistance protein MdtB</fullName>
    </recommendedName>
    <alternativeName>
        <fullName evidence="1">Multidrug transporter MdtB</fullName>
    </alternativeName>
</protein>